<dbReference type="EC" id="6.1.1.9" evidence="1"/>
<dbReference type="EMBL" id="AF222894">
    <property type="protein sequence ID" value="AAF30676.1"/>
    <property type="molecule type" value="Genomic_DNA"/>
</dbReference>
<dbReference type="RefSeq" id="WP_006688900.1">
    <property type="nucleotide sequence ID" value="NC_002162.1"/>
</dbReference>
<dbReference type="SMR" id="Q9PQM4"/>
<dbReference type="STRING" id="273119.UU267"/>
<dbReference type="EnsemblBacteria" id="AAF30676">
    <property type="protein sequence ID" value="AAF30676"/>
    <property type="gene ID" value="UU267"/>
</dbReference>
<dbReference type="GeneID" id="29672606"/>
<dbReference type="KEGG" id="uur:UU267"/>
<dbReference type="eggNOG" id="COG0525">
    <property type="taxonomic scope" value="Bacteria"/>
</dbReference>
<dbReference type="HOGENOM" id="CLU_001493_0_2_14"/>
<dbReference type="OrthoDB" id="9810365at2"/>
<dbReference type="Proteomes" id="UP000000423">
    <property type="component" value="Chromosome"/>
</dbReference>
<dbReference type="GO" id="GO:0005829">
    <property type="term" value="C:cytosol"/>
    <property type="evidence" value="ECO:0007669"/>
    <property type="project" value="TreeGrafter"/>
</dbReference>
<dbReference type="GO" id="GO:0002161">
    <property type="term" value="F:aminoacyl-tRNA deacylase activity"/>
    <property type="evidence" value="ECO:0007669"/>
    <property type="project" value="InterPro"/>
</dbReference>
<dbReference type="GO" id="GO:0005524">
    <property type="term" value="F:ATP binding"/>
    <property type="evidence" value="ECO:0007669"/>
    <property type="project" value="UniProtKB-UniRule"/>
</dbReference>
<dbReference type="GO" id="GO:0004832">
    <property type="term" value="F:valine-tRNA ligase activity"/>
    <property type="evidence" value="ECO:0007669"/>
    <property type="project" value="UniProtKB-UniRule"/>
</dbReference>
<dbReference type="GO" id="GO:0006438">
    <property type="term" value="P:valyl-tRNA aminoacylation"/>
    <property type="evidence" value="ECO:0007669"/>
    <property type="project" value="UniProtKB-UniRule"/>
</dbReference>
<dbReference type="CDD" id="cd07962">
    <property type="entry name" value="Anticodon_Ia_Val"/>
    <property type="match status" value="1"/>
</dbReference>
<dbReference type="CDD" id="cd00817">
    <property type="entry name" value="ValRS_core"/>
    <property type="match status" value="1"/>
</dbReference>
<dbReference type="FunFam" id="3.40.50.620:FF:000098">
    <property type="entry name" value="Valine--tRNA ligase"/>
    <property type="match status" value="1"/>
</dbReference>
<dbReference type="Gene3D" id="3.40.50.620">
    <property type="entry name" value="HUPs"/>
    <property type="match status" value="2"/>
</dbReference>
<dbReference type="Gene3D" id="1.10.730.10">
    <property type="entry name" value="Isoleucyl-tRNA Synthetase, Domain 1"/>
    <property type="match status" value="1"/>
</dbReference>
<dbReference type="Gene3D" id="1.10.287.380">
    <property type="entry name" value="Valyl-tRNA synthetase, C-terminal domain"/>
    <property type="match status" value="1"/>
</dbReference>
<dbReference type="HAMAP" id="MF_02004">
    <property type="entry name" value="Val_tRNA_synth_type1"/>
    <property type="match status" value="1"/>
</dbReference>
<dbReference type="InterPro" id="IPR001412">
    <property type="entry name" value="aa-tRNA-synth_I_CS"/>
</dbReference>
<dbReference type="InterPro" id="IPR002300">
    <property type="entry name" value="aa-tRNA-synth_Ia"/>
</dbReference>
<dbReference type="InterPro" id="IPR033705">
    <property type="entry name" value="Anticodon_Ia_Val"/>
</dbReference>
<dbReference type="InterPro" id="IPR013155">
    <property type="entry name" value="M/V/L/I-tRNA-synth_anticd-bd"/>
</dbReference>
<dbReference type="InterPro" id="IPR014729">
    <property type="entry name" value="Rossmann-like_a/b/a_fold"/>
</dbReference>
<dbReference type="InterPro" id="IPR010978">
    <property type="entry name" value="tRNA-bd_arm"/>
</dbReference>
<dbReference type="InterPro" id="IPR009080">
    <property type="entry name" value="tRNAsynth_Ia_anticodon-bd"/>
</dbReference>
<dbReference type="InterPro" id="IPR037118">
    <property type="entry name" value="Val-tRNA_synth_C_sf"/>
</dbReference>
<dbReference type="InterPro" id="IPR019499">
    <property type="entry name" value="Val-tRNA_synth_tRNA-bd"/>
</dbReference>
<dbReference type="InterPro" id="IPR009008">
    <property type="entry name" value="Val/Leu/Ile-tRNA-synth_edit"/>
</dbReference>
<dbReference type="InterPro" id="IPR002303">
    <property type="entry name" value="Valyl-tRNA_ligase"/>
</dbReference>
<dbReference type="NCBIfam" id="NF004349">
    <property type="entry name" value="PRK05729.1"/>
    <property type="match status" value="1"/>
</dbReference>
<dbReference type="NCBIfam" id="TIGR00422">
    <property type="entry name" value="valS"/>
    <property type="match status" value="1"/>
</dbReference>
<dbReference type="PANTHER" id="PTHR11946:SF93">
    <property type="entry name" value="VALINE--TRNA LIGASE, CHLOROPLASTIC_MITOCHONDRIAL 2"/>
    <property type="match status" value="1"/>
</dbReference>
<dbReference type="PANTHER" id="PTHR11946">
    <property type="entry name" value="VALYL-TRNA SYNTHETASES"/>
    <property type="match status" value="1"/>
</dbReference>
<dbReference type="Pfam" id="PF08264">
    <property type="entry name" value="Anticodon_1"/>
    <property type="match status" value="1"/>
</dbReference>
<dbReference type="Pfam" id="PF00133">
    <property type="entry name" value="tRNA-synt_1"/>
    <property type="match status" value="2"/>
</dbReference>
<dbReference type="Pfam" id="PF10458">
    <property type="entry name" value="Val_tRNA-synt_C"/>
    <property type="match status" value="1"/>
</dbReference>
<dbReference type="PRINTS" id="PR00986">
    <property type="entry name" value="TRNASYNTHVAL"/>
</dbReference>
<dbReference type="SUPFAM" id="SSF47323">
    <property type="entry name" value="Anticodon-binding domain of a subclass of class I aminoacyl-tRNA synthetases"/>
    <property type="match status" value="1"/>
</dbReference>
<dbReference type="SUPFAM" id="SSF52374">
    <property type="entry name" value="Nucleotidylyl transferase"/>
    <property type="match status" value="1"/>
</dbReference>
<dbReference type="SUPFAM" id="SSF46589">
    <property type="entry name" value="tRNA-binding arm"/>
    <property type="match status" value="1"/>
</dbReference>
<dbReference type="SUPFAM" id="SSF50677">
    <property type="entry name" value="ValRS/IleRS/LeuRS editing domain"/>
    <property type="match status" value="1"/>
</dbReference>
<dbReference type="PROSITE" id="PS00178">
    <property type="entry name" value="AA_TRNA_LIGASE_I"/>
    <property type="match status" value="1"/>
</dbReference>
<protein>
    <recommendedName>
        <fullName evidence="1">Valine--tRNA ligase</fullName>
        <ecNumber evidence="1">6.1.1.9</ecNumber>
    </recommendedName>
    <alternativeName>
        <fullName evidence="1">Valyl-tRNA synthetase</fullName>
        <shortName evidence="1">ValRS</shortName>
    </alternativeName>
</protein>
<organism>
    <name type="scientific">Ureaplasma parvum serovar 3 (strain ATCC 700970)</name>
    <dbReference type="NCBI Taxonomy" id="273119"/>
    <lineage>
        <taxon>Bacteria</taxon>
        <taxon>Bacillati</taxon>
        <taxon>Mycoplasmatota</taxon>
        <taxon>Mycoplasmoidales</taxon>
        <taxon>Mycoplasmoidaceae</taxon>
        <taxon>Ureaplasma</taxon>
    </lineage>
</organism>
<gene>
    <name evidence="1" type="primary">valS</name>
    <name type="ordered locus">UU267</name>
</gene>
<keyword id="KW-0030">Aminoacyl-tRNA synthetase</keyword>
<keyword id="KW-0067">ATP-binding</keyword>
<keyword id="KW-0175">Coiled coil</keyword>
<keyword id="KW-0963">Cytoplasm</keyword>
<keyword id="KW-0436">Ligase</keyword>
<keyword id="KW-0547">Nucleotide-binding</keyword>
<keyword id="KW-0648">Protein biosynthesis</keyword>
<keyword id="KW-1185">Reference proteome</keyword>
<sequence length="874" mass="103390">MKKKLSKKYSFKEVEANKLLFWQENNLFKAQINSTKKPFTIVLPPPNVTGHLHIGHAYDFTLSDILMRYKKLKGYDSFIIPGTDHAGIATQTKFEKNLKVNAQTNRFNLGRELFLEKLKIWKDEQINYIHKQWNALGLGLDYSNYLFTLDPIVVQTVREVFVKMFNEHIIYRDKKLVNWDIQLKTAISNIEVIHKEVEQKLYYIKYLSQDQKDFVVVATSRPETMFGDKYLVINPKDKRYFHLHNKIFINPINNIEMTVILDDYIDIEFGTGVMKCTPAHDFNDYELAKKHNLEIINIMNADGTLNEKCGEFKGLDRLEARSLIIDKLQKNNHLLKVESYRTSVGFSERTNEIVEPYLSHQWFIKMDSLIKDTIKMQDDCNNKVDFYPNRFNKTLLTWLKNTEDWCISRQLWWGHQIPVWYHKKTNQIYCDTIPPKDLENWIQDEDVLDTWFSSGMWPLLTTKWNYNSHFFDRYFPTSLIVTGMDILFFWVSRMMNFSQYLVEKKPFKDVLIHGLIRDSQGRKMSKSLGNGIDPFDIIDKYGLDAMRLFFASCTTIGEDLNFSTERLGANWNYLNKIWNIAKYIENLDEINDNLNFEDVDKFCDVNKWILTELSKLTLEINKNMDKYNLVVATKYLYDFIWNTFASYYLEYTKVLLQDLTLKNETIKTIRYVFNKILIMLQPFAPNISEEIWLCLNQTNNSILLQEYPIINFEFETIIIDKIAKIILEIRKLRLEENINNRINLCFELISPNDAFYKSKIKLVNLLLILVNAEINEIKKTSSNNYTYELVIDDFILKTSYEKPIDYVFQMKKASEQLNYLENEIQRATNLLNNSGFINKAPAQLIIKEKNKLINLKKEHANLLKTLTDLKQKVK</sequence>
<evidence type="ECO:0000255" key="1">
    <source>
        <dbReference type="HAMAP-Rule" id="MF_02004"/>
    </source>
</evidence>
<name>SYV_UREPA</name>
<comment type="function">
    <text evidence="1">Catalyzes the attachment of valine to tRNA(Val). As ValRS can inadvertently accommodate and process structurally similar amino acids such as threonine, to avoid such errors, it has a 'posttransfer' editing activity that hydrolyzes mischarged Thr-tRNA(Val) in a tRNA-dependent manner.</text>
</comment>
<comment type="catalytic activity">
    <reaction evidence="1">
        <text>tRNA(Val) + L-valine + ATP = L-valyl-tRNA(Val) + AMP + diphosphate</text>
        <dbReference type="Rhea" id="RHEA:10704"/>
        <dbReference type="Rhea" id="RHEA-COMP:9672"/>
        <dbReference type="Rhea" id="RHEA-COMP:9708"/>
        <dbReference type="ChEBI" id="CHEBI:30616"/>
        <dbReference type="ChEBI" id="CHEBI:33019"/>
        <dbReference type="ChEBI" id="CHEBI:57762"/>
        <dbReference type="ChEBI" id="CHEBI:78442"/>
        <dbReference type="ChEBI" id="CHEBI:78537"/>
        <dbReference type="ChEBI" id="CHEBI:456215"/>
        <dbReference type="EC" id="6.1.1.9"/>
    </reaction>
</comment>
<comment type="subunit">
    <text evidence="1">Monomer.</text>
</comment>
<comment type="subcellular location">
    <subcellularLocation>
        <location evidence="1">Cytoplasm</location>
    </subcellularLocation>
</comment>
<comment type="domain">
    <text evidence="1">ValRS has two distinct active sites: one for aminoacylation and one for editing. The misactivated threonine is translocated from the active site to the editing site.</text>
</comment>
<comment type="domain">
    <text evidence="1">The C-terminal coiled-coil domain is crucial for aminoacylation activity.</text>
</comment>
<comment type="similarity">
    <text evidence="1">Belongs to the class-I aminoacyl-tRNA synthetase family. ValS type 1 subfamily.</text>
</comment>
<accession>Q9PQM4</accession>
<reference key="1">
    <citation type="journal article" date="2000" name="Nature">
        <title>The complete sequence of the mucosal pathogen Ureaplasma urealyticum.</title>
        <authorList>
            <person name="Glass J.I."/>
            <person name="Lefkowitz E.J."/>
            <person name="Glass J.S."/>
            <person name="Heiner C.R."/>
            <person name="Chen E.Y."/>
            <person name="Cassell G.H."/>
        </authorList>
    </citation>
    <scope>NUCLEOTIDE SEQUENCE [LARGE SCALE GENOMIC DNA]</scope>
    <source>
        <strain>ATCC 700970</strain>
    </source>
</reference>
<proteinExistence type="inferred from homology"/>
<feature type="chain" id="PRO_0000106242" description="Valine--tRNA ligase">
    <location>
        <begin position="1"/>
        <end position="874"/>
    </location>
</feature>
<feature type="coiled-coil region" evidence="1">
    <location>
        <begin position="805"/>
        <end position="874"/>
    </location>
</feature>
<feature type="short sequence motif" description="'HIGH' region">
    <location>
        <begin position="46"/>
        <end position="56"/>
    </location>
</feature>
<feature type="short sequence motif" description="'KMSKS' region">
    <location>
        <begin position="523"/>
        <end position="527"/>
    </location>
</feature>
<feature type="binding site" evidence="1">
    <location>
        <position position="526"/>
    </location>
    <ligand>
        <name>ATP</name>
        <dbReference type="ChEBI" id="CHEBI:30616"/>
    </ligand>
</feature>